<reference key="1">
    <citation type="journal article" date="2004" name="Clin. Exp. Allergy">
        <title>Fel d 4, a cat lipocalin allergen.</title>
        <authorList>
            <person name="Smith W.-A."/>
            <person name="Butler A.J.L."/>
            <person name="Hazell L.A."/>
            <person name="Chapman M.D."/>
            <person name="Pomes A."/>
            <person name="Nickels D.G."/>
            <person name="Thomas W.R."/>
        </authorList>
    </citation>
    <scope>NUCLEOTIDE SEQUENCE [MRNA]</scope>
    <scope>ALLERGEN</scope>
    <source>
        <tissue>Submandibular gland</tissue>
    </source>
</reference>
<reference key="2">
    <citation type="journal article" date="2010" name="Cell">
        <title>The vomeronasal organ mediates interspecies defensive behaviors through detection of protein pheromone homologs.</title>
        <authorList>
            <person name="Papes F."/>
            <person name="Logan D.W."/>
            <person name="Stowers L."/>
        </authorList>
    </citation>
    <scope>FUNCTION</scope>
    <scope>TISSUE SPECIFICITY</scope>
</reference>
<sequence length="186" mass="21308">MKLLLLCLGLILVCAHEEENVVRSNIDISKISGEWYSILLASDVKEKIEENGSMRVFVEHIKALDNSSLSFVFHTKENGKCTEIFLVADKTKDGVYTVVYDGYNVFSIVETVYDEYILLHLLNFDKTRPFQLVEFYAREPDVSQKLKEKFVKYCQEHGIVNILDLTEVDRCLQARGSEVAQDSSVE</sequence>
<comment type="function">
    <text evidence="4">May be a pheromone carrier. Acts as a kairomone, detected by the prey vomeronasal organ and inducing fear reactions in mice.</text>
</comment>
<comment type="subcellular location">
    <subcellularLocation>
        <location>Secreted</location>
    </subcellularLocation>
</comment>
<comment type="tissue specificity">
    <text evidence="4">Abundant in urine (at protein level).</text>
</comment>
<comment type="allergen">
    <text evidence="3">Causes an allergic reaction in human. Binds to IgE.</text>
</comment>
<comment type="similarity">
    <text evidence="5">Belongs to the calycin superfamily. Lipocalin family.</text>
</comment>
<keyword id="KW-0002">3D-structure</keyword>
<keyword id="KW-0020">Allergen</keyword>
<keyword id="KW-0085">Behavior</keyword>
<keyword id="KW-1015">Disulfide bond</keyword>
<keyword id="KW-0325">Glycoprotein</keyword>
<keyword id="KW-1185">Reference proteome</keyword>
<keyword id="KW-0964">Secreted</keyword>
<keyword id="KW-0732">Signal</keyword>
<keyword id="KW-0813">Transport</keyword>
<evidence type="ECO:0000250" key="1"/>
<evidence type="ECO:0000255" key="2"/>
<evidence type="ECO:0000269" key="3">
    <source>
    </source>
</evidence>
<evidence type="ECO:0000269" key="4">
    <source>
    </source>
</evidence>
<evidence type="ECO:0000305" key="5"/>
<evidence type="ECO:0007829" key="6">
    <source>
        <dbReference type="PDB" id="8AMC"/>
    </source>
</evidence>
<proteinExistence type="evidence at protein level"/>
<protein>
    <recommendedName>
        <fullName>Allergen Fel d 4</fullName>
    </recommendedName>
    <allergenName>Fel d 4</allergenName>
</protein>
<feature type="signal peptide" evidence="2">
    <location>
        <begin position="1"/>
        <end position="15"/>
    </location>
</feature>
<feature type="chain" id="PRO_0000041864" description="Allergen Fel d 4">
    <location>
        <begin position="16"/>
        <end position="186"/>
    </location>
</feature>
<feature type="glycosylation site" description="N-linked (GlcNAc...) asparagine" evidence="2">
    <location>
        <position position="51"/>
    </location>
</feature>
<feature type="glycosylation site" description="N-linked (GlcNAc...) asparagine" evidence="2">
    <location>
        <position position="66"/>
    </location>
</feature>
<feature type="disulfide bond" evidence="1">
    <location>
        <begin position="81"/>
        <end position="171"/>
    </location>
</feature>
<feature type="helix" evidence="6">
    <location>
        <begin position="28"/>
        <end position="31"/>
    </location>
</feature>
<feature type="strand" evidence="6">
    <location>
        <begin position="36"/>
        <end position="44"/>
    </location>
</feature>
<feature type="helix" evidence="6">
    <location>
        <begin position="45"/>
        <end position="48"/>
    </location>
</feature>
<feature type="strand" evidence="6">
    <location>
        <begin position="57"/>
        <end position="65"/>
    </location>
</feature>
<feature type="strand" evidence="6">
    <location>
        <begin position="68"/>
        <end position="77"/>
    </location>
</feature>
<feature type="strand" evidence="6">
    <location>
        <begin position="80"/>
        <end position="90"/>
    </location>
</feature>
<feature type="strand" evidence="6">
    <location>
        <begin position="95"/>
        <end position="112"/>
    </location>
</feature>
<feature type="turn" evidence="6">
    <location>
        <begin position="113"/>
        <end position="115"/>
    </location>
</feature>
<feature type="strand" evidence="6">
    <location>
        <begin position="116"/>
        <end position="123"/>
    </location>
</feature>
<feature type="strand" evidence="6">
    <location>
        <begin position="125"/>
        <end position="127"/>
    </location>
</feature>
<feature type="strand" evidence="6">
    <location>
        <begin position="130"/>
        <end position="140"/>
    </location>
</feature>
<feature type="helix" evidence="6">
    <location>
        <begin position="144"/>
        <end position="155"/>
    </location>
</feature>
<feature type="turn" evidence="6">
    <location>
        <begin position="156"/>
        <end position="158"/>
    </location>
</feature>
<feature type="strand" evidence="6">
    <location>
        <begin position="161"/>
        <end position="164"/>
    </location>
</feature>
<feature type="helix" evidence="6">
    <location>
        <begin position="165"/>
        <end position="167"/>
    </location>
</feature>
<feature type="helix" evidence="6">
    <location>
        <begin position="172"/>
        <end position="174"/>
    </location>
</feature>
<dbReference type="EMBL" id="AY497902">
    <property type="protein sequence ID" value="AAS77253.1"/>
    <property type="molecule type" value="mRNA"/>
</dbReference>
<dbReference type="RefSeq" id="NP_001009233.1">
    <property type="nucleotide sequence ID" value="NM_001009233.1"/>
</dbReference>
<dbReference type="PDB" id="8AMC">
    <property type="method" value="X-ray"/>
    <property type="resolution" value="2.95 A"/>
    <property type="chains" value="A/B/C/D=16-186"/>
</dbReference>
<dbReference type="PDBsum" id="8AMC"/>
<dbReference type="SMR" id="Q5VFH6"/>
<dbReference type="STRING" id="9685.ENSFCAP00000024901"/>
<dbReference type="Allergome" id="1326">
    <property type="allergen name" value="Fel d 4"/>
</dbReference>
<dbReference type="Allergome" id="3281">
    <property type="allergen name" value="Fel d 4.0101"/>
</dbReference>
<dbReference type="PaxDb" id="9685-ENSFCAP00000024901"/>
<dbReference type="GeneID" id="493739"/>
<dbReference type="KEGG" id="fca:493739"/>
<dbReference type="eggNOG" id="ENOG502SWRK">
    <property type="taxonomic scope" value="Eukaryota"/>
</dbReference>
<dbReference type="InParanoid" id="Q5VFH6"/>
<dbReference type="OrthoDB" id="9048943at2759"/>
<dbReference type="Proteomes" id="UP000011712">
    <property type="component" value="Unplaced"/>
</dbReference>
<dbReference type="GO" id="GO:0005615">
    <property type="term" value="C:extracellular space"/>
    <property type="evidence" value="ECO:0000318"/>
    <property type="project" value="GO_Central"/>
</dbReference>
<dbReference type="GO" id="GO:0005549">
    <property type="term" value="F:odorant binding"/>
    <property type="evidence" value="ECO:0000318"/>
    <property type="project" value="GO_Central"/>
</dbReference>
<dbReference type="GO" id="GO:0036094">
    <property type="term" value="F:small molecule binding"/>
    <property type="evidence" value="ECO:0007669"/>
    <property type="project" value="InterPro"/>
</dbReference>
<dbReference type="FunFam" id="2.40.128.20:FF:000008">
    <property type="entry name" value="Major urinary protein"/>
    <property type="match status" value="1"/>
</dbReference>
<dbReference type="Gene3D" id="2.40.128.20">
    <property type="match status" value="1"/>
</dbReference>
<dbReference type="InterPro" id="IPR012674">
    <property type="entry name" value="Calycin"/>
</dbReference>
<dbReference type="InterPro" id="IPR002345">
    <property type="entry name" value="Lipocalin"/>
</dbReference>
<dbReference type="InterPro" id="IPR022272">
    <property type="entry name" value="Lipocalin_CS"/>
</dbReference>
<dbReference type="InterPro" id="IPR000566">
    <property type="entry name" value="Lipocln_cytosolic_FA-bd_dom"/>
</dbReference>
<dbReference type="InterPro" id="IPR002971">
    <property type="entry name" value="Maj_urinary"/>
</dbReference>
<dbReference type="PANTHER" id="PTHR11430">
    <property type="entry name" value="LIPOCALIN"/>
    <property type="match status" value="1"/>
</dbReference>
<dbReference type="PANTHER" id="PTHR11430:SF76">
    <property type="entry name" value="MAJOR URINARY PROTEIN 1-RELATED"/>
    <property type="match status" value="1"/>
</dbReference>
<dbReference type="Pfam" id="PF00061">
    <property type="entry name" value="Lipocalin"/>
    <property type="match status" value="1"/>
</dbReference>
<dbReference type="PRINTS" id="PR00179">
    <property type="entry name" value="LIPOCALIN"/>
</dbReference>
<dbReference type="PRINTS" id="PR01221">
    <property type="entry name" value="MAJORURINARY"/>
</dbReference>
<dbReference type="SUPFAM" id="SSF50814">
    <property type="entry name" value="Lipocalins"/>
    <property type="match status" value="1"/>
</dbReference>
<dbReference type="PROSITE" id="PS00213">
    <property type="entry name" value="LIPOCALIN"/>
    <property type="match status" value="1"/>
</dbReference>
<name>ALL4_FELCA</name>
<accession>Q5VFH6</accession>
<organism>
    <name type="scientific">Felis catus</name>
    <name type="common">Cat</name>
    <name type="synonym">Felis silvestris catus</name>
    <dbReference type="NCBI Taxonomy" id="9685"/>
    <lineage>
        <taxon>Eukaryota</taxon>
        <taxon>Metazoa</taxon>
        <taxon>Chordata</taxon>
        <taxon>Craniata</taxon>
        <taxon>Vertebrata</taxon>
        <taxon>Euteleostomi</taxon>
        <taxon>Mammalia</taxon>
        <taxon>Eutheria</taxon>
        <taxon>Laurasiatheria</taxon>
        <taxon>Carnivora</taxon>
        <taxon>Feliformia</taxon>
        <taxon>Felidae</taxon>
        <taxon>Felinae</taxon>
        <taxon>Felis</taxon>
    </lineage>
</organism>